<dbReference type="EMBL" id="CP000606">
    <property type="protein sequence ID" value="ABO25488.1"/>
    <property type="molecule type" value="Genomic_DNA"/>
</dbReference>
<dbReference type="RefSeq" id="WP_011867416.1">
    <property type="nucleotide sequence ID" value="NC_009092.1"/>
</dbReference>
<dbReference type="SMR" id="A3QJ40"/>
<dbReference type="STRING" id="323850.Shew_3622"/>
<dbReference type="KEGG" id="slo:Shew_3622"/>
<dbReference type="eggNOG" id="COG1281">
    <property type="taxonomic scope" value="Bacteria"/>
</dbReference>
<dbReference type="HOGENOM" id="CLU_054493_0_0_6"/>
<dbReference type="OrthoDB" id="9793753at2"/>
<dbReference type="Proteomes" id="UP000001558">
    <property type="component" value="Chromosome"/>
</dbReference>
<dbReference type="GO" id="GO:0005737">
    <property type="term" value="C:cytoplasm"/>
    <property type="evidence" value="ECO:0007669"/>
    <property type="project" value="UniProtKB-SubCell"/>
</dbReference>
<dbReference type="GO" id="GO:0044183">
    <property type="term" value="F:protein folding chaperone"/>
    <property type="evidence" value="ECO:0007669"/>
    <property type="project" value="TreeGrafter"/>
</dbReference>
<dbReference type="GO" id="GO:0051082">
    <property type="term" value="F:unfolded protein binding"/>
    <property type="evidence" value="ECO:0007669"/>
    <property type="project" value="UniProtKB-UniRule"/>
</dbReference>
<dbReference type="GO" id="GO:0042026">
    <property type="term" value="P:protein refolding"/>
    <property type="evidence" value="ECO:0007669"/>
    <property type="project" value="TreeGrafter"/>
</dbReference>
<dbReference type="CDD" id="cd00498">
    <property type="entry name" value="Hsp33"/>
    <property type="match status" value="1"/>
</dbReference>
<dbReference type="Gene3D" id="1.10.287.480">
    <property type="entry name" value="helix hairpin bin"/>
    <property type="match status" value="1"/>
</dbReference>
<dbReference type="Gene3D" id="3.55.30.10">
    <property type="entry name" value="Hsp33 domain"/>
    <property type="match status" value="1"/>
</dbReference>
<dbReference type="Gene3D" id="3.90.1280.10">
    <property type="entry name" value="HSP33 redox switch-like"/>
    <property type="match status" value="1"/>
</dbReference>
<dbReference type="HAMAP" id="MF_00117">
    <property type="entry name" value="HslO"/>
    <property type="match status" value="1"/>
</dbReference>
<dbReference type="InterPro" id="IPR000397">
    <property type="entry name" value="Heat_shock_Hsp33"/>
</dbReference>
<dbReference type="InterPro" id="IPR016154">
    <property type="entry name" value="Heat_shock_Hsp33_C"/>
</dbReference>
<dbReference type="InterPro" id="IPR016153">
    <property type="entry name" value="Heat_shock_Hsp33_N"/>
</dbReference>
<dbReference type="InterPro" id="IPR023212">
    <property type="entry name" value="Hsp33_helix_hairpin_bin_dom_sf"/>
</dbReference>
<dbReference type="NCBIfam" id="NF001033">
    <property type="entry name" value="PRK00114.1"/>
    <property type="match status" value="1"/>
</dbReference>
<dbReference type="PANTHER" id="PTHR30111">
    <property type="entry name" value="33 KDA CHAPERONIN"/>
    <property type="match status" value="1"/>
</dbReference>
<dbReference type="PANTHER" id="PTHR30111:SF1">
    <property type="entry name" value="33 KDA CHAPERONIN"/>
    <property type="match status" value="1"/>
</dbReference>
<dbReference type="Pfam" id="PF01430">
    <property type="entry name" value="HSP33"/>
    <property type="match status" value="1"/>
</dbReference>
<dbReference type="PIRSF" id="PIRSF005261">
    <property type="entry name" value="Heat_shock_Hsp33"/>
    <property type="match status" value="1"/>
</dbReference>
<dbReference type="SUPFAM" id="SSF64397">
    <property type="entry name" value="Hsp33 domain"/>
    <property type="match status" value="1"/>
</dbReference>
<dbReference type="SUPFAM" id="SSF118352">
    <property type="entry name" value="HSP33 redox switch-like"/>
    <property type="match status" value="1"/>
</dbReference>
<protein>
    <recommendedName>
        <fullName evidence="1">33 kDa chaperonin</fullName>
    </recommendedName>
    <alternativeName>
        <fullName evidence="1">Heat shock protein 33 homolog</fullName>
        <shortName evidence="1">HSP33</shortName>
    </alternativeName>
</protein>
<organism>
    <name type="scientific">Shewanella loihica (strain ATCC BAA-1088 / PV-4)</name>
    <dbReference type="NCBI Taxonomy" id="323850"/>
    <lineage>
        <taxon>Bacteria</taxon>
        <taxon>Pseudomonadati</taxon>
        <taxon>Pseudomonadota</taxon>
        <taxon>Gammaproteobacteria</taxon>
        <taxon>Alteromonadales</taxon>
        <taxon>Shewanellaceae</taxon>
        <taxon>Shewanella</taxon>
    </lineage>
</organism>
<gene>
    <name evidence="1" type="primary">hslO</name>
    <name type="ordered locus">Shew_3622</name>
</gene>
<accession>A3QJ40</accession>
<name>HSLO_SHELP</name>
<proteinExistence type="inferred from homology"/>
<reference key="1">
    <citation type="submission" date="2007-03" db="EMBL/GenBank/DDBJ databases">
        <title>Complete sequence of Shewanella loihica PV-4.</title>
        <authorList>
            <consortium name="US DOE Joint Genome Institute"/>
            <person name="Copeland A."/>
            <person name="Lucas S."/>
            <person name="Lapidus A."/>
            <person name="Barry K."/>
            <person name="Detter J.C."/>
            <person name="Glavina del Rio T."/>
            <person name="Hammon N."/>
            <person name="Israni S."/>
            <person name="Dalin E."/>
            <person name="Tice H."/>
            <person name="Pitluck S."/>
            <person name="Chain P."/>
            <person name="Malfatti S."/>
            <person name="Shin M."/>
            <person name="Vergez L."/>
            <person name="Schmutz J."/>
            <person name="Larimer F."/>
            <person name="Land M."/>
            <person name="Hauser L."/>
            <person name="Kyrpides N."/>
            <person name="Mikhailova N."/>
            <person name="Romine M.F."/>
            <person name="Serres G."/>
            <person name="Fredrickson J."/>
            <person name="Tiedje J."/>
            <person name="Richardson P."/>
        </authorList>
    </citation>
    <scope>NUCLEOTIDE SEQUENCE [LARGE SCALE GENOMIC DNA]</scope>
    <source>
        <strain>ATCC BAA-1088 / PV-4</strain>
    </source>
</reference>
<keyword id="KW-0143">Chaperone</keyword>
<keyword id="KW-0963">Cytoplasm</keyword>
<keyword id="KW-1015">Disulfide bond</keyword>
<keyword id="KW-0676">Redox-active center</keyword>
<keyword id="KW-1185">Reference proteome</keyword>
<keyword id="KW-0862">Zinc</keyword>
<evidence type="ECO:0000255" key="1">
    <source>
        <dbReference type="HAMAP-Rule" id="MF_00117"/>
    </source>
</evidence>
<sequence length="286" mass="31902">MSKDILNRYLFDNADVRGQIVQLEKSYQEILSAHTYPEAIARLLGELMAATSLLTATLKFDGDISVQVQGNGPVSLAVINGNNLQQLRGVARWEGEVAKDASLQQLMGQGHMVITLTPNNGERYQGVVALEKETLAECLEQYFLQSEQLPTAIRLFANGKQAAGMLLQVLPGEDEHNEEFEHLEQLTSTIKAEELFELEATEVLHRLYHQEEVRLFDPIEVTFSCTCSRERSGQALKTVAKEELDAILAEQGKIEMGCEYCNSSYSFDSIDIEALFKNAPKADTQQ</sequence>
<feature type="chain" id="PRO_1000015567" description="33 kDa chaperonin">
    <location>
        <begin position="1"/>
        <end position="286"/>
    </location>
</feature>
<feature type="disulfide bond" description="Redox-active" evidence="1">
    <location>
        <begin position="225"/>
        <end position="227"/>
    </location>
</feature>
<feature type="disulfide bond" description="Redox-active" evidence="1">
    <location>
        <begin position="258"/>
        <end position="261"/>
    </location>
</feature>
<comment type="function">
    <text evidence="1">Redox regulated molecular chaperone. Protects both thermally unfolding and oxidatively damaged proteins from irreversible aggregation. Plays an important role in the bacterial defense system toward oxidative stress.</text>
</comment>
<comment type="subcellular location">
    <subcellularLocation>
        <location evidence="1">Cytoplasm</location>
    </subcellularLocation>
</comment>
<comment type="PTM">
    <text evidence="1">Under oxidizing conditions two disulfide bonds are formed involving the reactive cysteines. Under reducing conditions zinc is bound to the reactive cysteines and the protein is inactive.</text>
</comment>
<comment type="similarity">
    <text evidence="1">Belongs to the HSP33 family.</text>
</comment>